<sequence>MSIILGIDPGSRITGYGVIRQVGRQLTYLGSGCIRTKVDDLPSRLKLIYAGVTEIITQFQPDYFAIEQVFMAKNADSALKLGQARGVAIVAAVNQELPVFEYAARQVKQTVVGIGSAEKSQVQHMVRTLLKLPANPQADAADALAIAITHCHVSQNAMQMSESRLNLARGRMR</sequence>
<protein>
    <recommendedName>
        <fullName evidence="1">Crossover junction endodeoxyribonuclease RuvC</fullName>
        <ecNumber evidence="1">3.1.21.10</ecNumber>
    </recommendedName>
    <alternativeName>
        <fullName evidence="1">Holliday junction nuclease RuvC</fullName>
    </alternativeName>
    <alternativeName>
        <fullName evidence="1">Holliday junction resolvase RuvC</fullName>
    </alternativeName>
</protein>
<comment type="function">
    <text evidence="1">The RuvA-RuvB-RuvC complex processes Holliday junction (HJ) DNA during genetic recombination and DNA repair. Endonuclease that resolves HJ intermediates. Cleaves cruciform DNA by making single-stranded nicks across the HJ at symmetrical positions within the homologous arms, yielding a 5'-phosphate and a 3'-hydroxyl group; requires a central core of homology in the junction. The consensus cleavage sequence is 5'-(A/T)TT(C/G)-3'. Cleavage occurs on the 3'-side of the TT dinucleotide at the point of strand exchange. HJ branch migration catalyzed by RuvA-RuvB allows RuvC to scan DNA until it finds its consensus sequence, where it cleaves and resolves the cruciform DNA.</text>
</comment>
<comment type="catalytic activity">
    <reaction evidence="1">
        <text>Endonucleolytic cleavage at a junction such as a reciprocal single-stranded crossover between two homologous DNA duplexes (Holliday junction).</text>
        <dbReference type="EC" id="3.1.21.10"/>
    </reaction>
</comment>
<comment type="cofactor">
    <cofactor evidence="1">
        <name>Mg(2+)</name>
        <dbReference type="ChEBI" id="CHEBI:18420"/>
    </cofactor>
    <text evidence="1">Binds 2 Mg(2+) ion per subunit.</text>
</comment>
<comment type="subunit">
    <text evidence="1">Homodimer which binds Holliday junction (HJ) DNA. The HJ becomes 2-fold symmetrical on binding to RuvC with unstacked arms; it has a different conformation from HJ DNA in complex with RuvA. In the full resolvosome a probable DNA-RuvA(4)-RuvB(12)-RuvC(2) complex forms which resolves the HJ.</text>
</comment>
<comment type="subcellular location">
    <subcellularLocation>
        <location evidence="1">Cytoplasm</location>
    </subcellularLocation>
</comment>
<comment type="similarity">
    <text evidence="1">Belongs to the RuvC family.</text>
</comment>
<keyword id="KW-0963">Cytoplasm</keyword>
<keyword id="KW-0227">DNA damage</keyword>
<keyword id="KW-0233">DNA recombination</keyword>
<keyword id="KW-0234">DNA repair</keyword>
<keyword id="KW-0238">DNA-binding</keyword>
<keyword id="KW-0255">Endonuclease</keyword>
<keyword id="KW-0378">Hydrolase</keyword>
<keyword id="KW-0460">Magnesium</keyword>
<keyword id="KW-0479">Metal-binding</keyword>
<keyword id="KW-0540">Nuclease</keyword>
<reference key="1">
    <citation type="submission" date="2007-11" db="EMBL/GenBank/DDBJ databases">
        <authorList>
            <consortium name="The Salmonella enterica serovar Paratyphi B Genome Sequencing Project"/>
            <person name="McClelland M."/>
            <person name="Sanderson E.K."/>
            <person name="Porwollik S."/>
            <person name="Spieth J."/>
            <person name="Clifton W.S."/>
            <person name="Fulton R."/>
            <person name="Cordes M."/>
            <person name="Wollam A."/>
            <person name="Shah N."/>
            <person name="Pepin K."/>
            <person name="Bhonagiri V."/>
            <person name="Nash W."/>
            <person name="Johnson M."/>
            <person name="Thiruvilangam P."/>
            <person name="Wilson R."/>
        </authorList>
    </citation>
    <scope>NUCLEOTIDE SEQUENCE [LARGE SCALE GENOMIC DNA]</scope>
    <source>
        <strain>ATCC BAA-1250 / SPB7</strain>
    </source>
</reference>
<dbReference type="EC" id="3.1.21.10" evidence="1"/>
<dbReference type="EMBL" id="CP000886">
    <property type="protein sequence ID" value="ABX66678.1"/>
    <property type="molecule type" value="Genomic_DNA"/>
</dbReference>
<dbReference type="RefSeq" id="WP_000022510.1">
    <property type="nucleotide sequence ID" value="NC_010102.1"/>
</dbReference>
<dbReference type="SMR" id="A9MUC2"/>
<dbReference type="KEGG" id="spq:SPAB_01266"/>
<dbReference type="PATRIC" id="fig|1016998.12.peg.1193"/>
<dbReference type="HOGENOM" id="CLU_091257_2_1_6"/>
<dbReference type="BioCyc" id="SENT1016998:SPAB_RS05255-MONOMER"/>
<dbReference type="Proteomes" id="UP000008556">
    <property type="component" value="Chromosome"/>
</dbReference>
<dbReference type="GO" id="GO:0005737">
    <property type="term" value="C:cytoplasm"/>
    <property type="evidence" value="ECO:0007669"/>
    <property type="project" value="UniProtKB-SubCell"/>
</dbReference>
<dbReference type="GO" id="GO:0048476">
    <property type="term" value="C:Holliday junction resolvase complex"/>
    <property type="evidence" value="ECO:0007669"/>
    <property type="project" value="UniProtKB-UniRule"/>
</dbReference>
<dbReference type="GO" id="GO:0008821">
    <property type="term" value="F:crossover junction DNA endonuclease activity"/>
    <property type="evidence" value="ECO:0007669"/>
    <property type="project" value="UniProtKB-UniRule"/>
</dbReference>
<dbReference type="GO" id="GO:0003677">
    <property type="term" value="F:DNA binding"/>
    <property type="evidence" value="ECO:0007669"/>
    <property type="project" value="UniProtKB-KW"/>
</dbReference>
<dbReference type="GO" id="GO:0000287">
    <property type="term" value="F:magnesium ion binding"/>
    <property type="evidence" value="ECO:0007669"/>
    <property type="project" value="UniProtKB-UniRule"/>
</dbReference>
<dbReference type="GO" id="GO:0006310">
    <property type="term" value="P:DNA recombination"/>
    <property type="evidence" value="ECO:0007669"/>
    <property type="project" value="UniProtKB-UniRule"/>
</dbReference>
<dbReference type="GO" id="GO:0006281">
    <property type="term" value="P:DNA repair"/>
    <property type="evidence" value="ECO:0007669"/>
    <property type="project" value="UniProtKB-UniRule"/>
</dbReference>
<dbReference type="CDD" id="cd16962">
    <property type="entry name" value="RuvC"/>
    <property type="match status" value="1"/>
</dbReference>
<dbReference type="FunFam" id="3.30.420.10:FF:000002">
    <property type="entry name" value="Crossover junction endodeoxyribonuclease RuvC"/>
    <property type="match status" value="1"/>
</dbReference>
<dbReference type="Gene3D" id="3.30.420.10">
    <property type="entry name" value="Ribonuclease H-like superfamily/Ribonuclease H"/>
    <property type="match status" value="1"/>
</dbReference>
<dbReference type="HAMAP" id="MF_00034">
    <property type="entry name" value="RuvC"/>
    <property type="match status" value="1"/>
</dbReference>
<dbReference type="InterPro" id="IPR012337">
    <property type="entry name" value="RNaseH-like_sf"/>
</dbReference>
<dbReference type="InterPro" id="IPR036397">
    <property type="entry name" value="RNaseH_sf"/>
</dbReference>
<dbReference type="InterPro" id="IPR020563">
    <property type="entry name" value="X-over_junc_endoDNase_Mg_BS"/>
</dbReference>
<dbReference type="InterPro" id="IPR002176">
    <property type="entry name" value="X-over_junc_endoDNase_RuvC"/>
</dbReference>
<dbReference type="NCBIfam" id="NF000711">
    <property type="entry name" value="PRK00039.2-1"/>
    <property type="match status" value="1"/>
</dbReference>
<dbReference type="NCBIfam" id="TIGR00228">
    <property type="entry name" value="ruvC"/>
    <property type="match status" value="1"/>
</dbReference>
<dbReference type="PANTHER" id="PTHR30194">
    <property type="entry name" value="CROSSOVER JUNCTION ENDODEOXYRIBONUCLEASE RUVC"/>
    <property type="match status" value="1"/>
</dbReference>
<dbReference type="PANTHER" id="PTHR30194:SF3">
    <property type="entry name" value="CROSSOVER JUNCTION ENDODEOXYRIBONUCLEASE RUVC"/>
    <property type="match status" value="1"/>
</dbReference>
<dbReference type="Pfam" id="PF02075">
    <property type="entry name" value="RuvC"/>
    <property type="match status" value="1"/>
</dbReference>
<dbReference type="PRINTS" id="PR00696">
    <property type="entry name" value="RSOLVASERUVC"/>
</dbReference>
<dbReference type="SUPFAM" id="SSF53098">
    <property type="entry name" value="Ribonuclease H-like"/>
    <property type="match status" value="1"/>
</dbReference>
<dbReference type="PROSITE" id="PS01321">
    <property type="entry name" value="RUVC"/>
    <property type="match status" value="1"/>
</dbReference>
<evidence type="ECO:0000255" key="1">
    <source>
        <dbReference type="HAMAP-Rule" id="MF_00034"/>
    </source>
</evidence>
<feature type="chain" id="PRO_1000074498" description="Crossover junction endodeoxyribonuclease RuvC">
    <location>
        <begin position="1"/>
        <end position="173"/>
    </location>
</feature>
<feature type="active site" evidence="1">
    <location>
        <position position="8"/>
    </location>
</feature>
<feature type="active site" evidence="1">
    <location>
        <position position="67"/>
    </location>
</feature>
<feature type="active site" evidence="1">
    <location>
        <position position="139"/>
    </location>
</feature>
<feature type="binding site" evidence="1">
    <location>
        <position position="8"/>
    </location>
    <ligand>
        <name>Mg(2+)</name>
        <dbReference type="ChEBI" id="CHEBI:18420"/>
        <label>1</label>
    </ligand>
</feature>
<feature type="binding site" evidence="1">
    <location>
        <position position="67"/>
    </location>
    <ligand>
        <name>Mg(2+)</name>
        <dbReference type="ChEBI" id="CHEBI:18420"/>
        <label>2</label>
    </ligand>
</feature>
<feature type="binding site" evidence="1">
    <location>
        <position position="139"/>
    </location>
    <ligand>
        <name>Mg(2+)</name>
        <dbReference type="ChEBI" id="CHEBI:18420"/>
        <label>1</label>
    </ligand>
</feature>
<accession>A9MUC2</accession>
<name>RUVC_SALPB</name>
<gene>
    <name evidence="1" type="primary">ruvC</name>
    <name type="ordered locus">SPAB_01266</name>
</gene>
<proteinExistence type="inferred from homology"/>
<organism>
    <name type="scientific">Salmonella paratyphi B (strain ATCC BAA-1250 / SPB7)</name>
    <dbReference type="NCBI Taxonomy" id="1016998"/>
    <lineage>
        <taxon>Bacteria</taxon>
        <taxon>Pseudomonadati</taxon>
        <taxon>Pseudomonadota</taxon>
        <taxon>Gammaproteobacteria</taxon>
        <taxon>Enterobacterales</taxon>
        <taxon>Enterobacteriaceae</taxon>
        <taxon>Salmonella</taxon>
    </lineage>
</organism>